<dbReference type="EC" id="2.3.3.13" evidence="1"/>
<dbReference type="EMBL" id="CP001098">
    <property type="protein sequence ID" value="ACL69840.1"/>
    <property type="molecule type" value="Genomic_DNA"/>
</dbReference>
<dbReference type="RefSeq" id="WP_012636025.1">
    <property type="nucleotide sequence ID" value="NC_011899.1"/>
</dbReference>
<dbReference type="SMR" id="B8CX21"/>
<dbReference type="STRING" id="373903.Hore_10860"/>
<dbReference type="KEGG" id="hor:Hore_10860"/>
<dbReference type="eggNOG" id="COG0119">
    <property type="taxonomic scope" value="Bacteria"/>
</dbReference>
<dbReference type="HOGENOM" id="CLU_022158_0_1_9"/>
<dbReference type="OrthoDB" id="9804858at2"/>
<dbReference type="UniPathway" id="UPA00048">
    <property type="reaction ID" value="UER00070"/>
</dbReference>
<dbReference type="Proteomes" id="UP000000719">
    <property type="component" value="Chromosome"/>
</dbReference>
<dbReference type="GO" id="GO:0005737">
    <property type="term" value="C:cytoplasm"/>
    <property type="evidence" value="ECO:0007669"/>
    <property type="project" value="UniProtKB-SubCell"/>
</dbReference>
<dbReference type="GO" id="GO:0003852">
    <property type="term" value="F:2-isopropylmalate synthase activity"/>
    <property type="evidence" value="ECO:0007669"/>
    <property type="project" value="UniProtKB-UniRule"/>
</dbReference>
<dbReference type="GO" id="GO:0003985">
    <property type="term" value="F:acetyl-CoA C-acetyltransferase activity"/>
    <property type="evidence" value="ECO:0007669"/>
    <property type="project" value="UniProtKB-UniRule"/>
</dbReference>
<dbReference type="GO" id="GO:0030145">
    <property type="term" value="F:manganese ion binding"/>
    <property type="evidence" value="ECO:0007669"/>
    <property type="project" value="UniProtKB-UniRule"/>
</dbReference>
<dbReference type="GO" id="GO:0009098">
    <property type="term" value="P:L-leucine biosynthetic process"/>
    <property type="evidence" value="ECO:0007669"/>
    <property type="project" value="UniProtKB-UniRule"/>
</dbReference>
<dbReference type="CDD" id="cd07940">
    <property type="entry name" value="DRE_TIM_IPMS"/>
    <property type="match status" value="1"/>
</dbReference>
<dbReference type="FunFam" id="1.10.238.260:FF:000001">
    <property type="entry name" value="2-isopropylmalate synthase"/>
    <property type="match status" value="1"/>
</dbReference>
<dbReference type="FunFam" id="3.20.20.70:FF:000010">
    <property type="entry name" value="2-isopropylmalate synthase"/>
    <property type="match status" value="1"/>
</dbReference>
<dbReference type="FunFam" id="3.30.160.270:FF:000003">
    <property type="entry name" value="2-isopropylmalate synthase"/>
    <property type="match status" value="1"/>
</dbReference>
<dbReference type="Gene3D" id="1.10.238.260">
    <property type="match status" value="1"/>
</dbReference>
<dbReference type="Gene3D" id="3.30.160.270">
    <property type="match status" value="1"/>
</dbReference>
<dbReference type="Gene3D" id="3.20.20.70">
    <property type="entry name" value="Aldolase class I"/>
    <property type="match status" value="1"/>
</dbReference>
<dbReference type="HAMAP" id="MF_01025">
    <property type="entry name" value="LeuA_type1"/>
    <property type="match status" value="1"/>
</dbReference>
<dbReference type="InterPro" id="IPR050073">
    <property type="entry name" value="2-IPM_HCS-like"/>
</dbReference>
<dbReference type="InterPro" id="IPR013709">
    <property type="entry name" value="2-isopropylmalate_synth_dimer"/>
</dbReference>
<dbReference type="InterPro" id="IPR002034">
    <property type="entry name" value="AIPM/Hcit_synth_CS"/>
</dbReference>
<dbReference type="InterPro" id="IPR013785">
    <property type="entry name" value="Aldolase_TIM"/>
</dbReference>
<dbReference type="InterPro" id="IPR054691">
    <property type="entry name" value="LeuA/HCS_post-cat"/>
</dbReference>
<dbReference type="InterPro" id="IPR036230">
    <property type="entry name" value="LeuA_allosteric_dom_sf"/>
</dbReference>
<dbReference type="InterPro" id="IPR005671">
    <property type="entry name" value="LeuA_bact_synth"/>
</dbReference>
<dbReference type="InterPro" id="IPR000891">
    <property type="entry name" value="PYR_CT"/>
</dbReference>
<dbReference type="NCBIfam" id="TIGR00973">
    <property type="entry name" value="leuA_bact"/>
    <property type="match status" value="1"/>
</dbReference>
<dbReference type="NCBIfam" id="NF002085">
    <property type="entry name" value="PRK00915.1-2"/>
    <property type="match status" value="1"/>
</dbReference>
<dbReference type="NCBIfam" id="NF002086">
    <property type="entry name" value="PRK00915.1-3"/>
    <property type="match status" value="1"/>
</dbReference>
<dbReference type="PANTHER" id="PTHR10277:SF9">
    <property type="entry name" value="2-ISOPROPYLMALATE SYNTHASE 1, CHLOROPLASTIC-RELATED"/>
    <property type="match status" value="1"/>
</dbReference>
<dbReference type="PANTHER" id="PTHR10277">
    <property type="entry name" value="HOMOCITRATE SYNTHASE-RELATED"/>
    <property type="match status" value="1"/>
</dbReference>
<dbReference type="Pfam" id="PF22617">
    <property type="entry name" value="HCS_D2"/>
    <property type="match status" value="1"/>
</dbReference>
<dbReference type="Pfam" id="PF00682">
    <property type="entry name" value="HMGL-like"/>
    <property type="match status" value="1"/>
</dbReference>
<dbReference type="Pfam" id="PF08502">
    <property type="entry name" value="LeuA_dimer"/>
    <property type="match status" value="1"/>
</dbReference>
<dbReference type="SMART" id="SM00917">
    <property type="entry name" value="LeuA_dimer"/>
    <property type="match status" value="1"/>
</dbReference>
<dbReference type="SUPFAM" id="SSF110921">
    <property type="entry name" value="2-isopropylmalate synthase LeuA, allosteric (dimerisation) domain"/>
    <property type="match status" value="1"/>
</dbReference>
<dbReference type="SUPFAM" id="SSF51569">
    <property type="entry name" value="Aldolase"/>
    <property type="match status" value="1"/>
</dbReference>
<dbReference type="PROSITE" id="PS00815">
    <property type="entry name" value="AIPM_HOMOCIT_SYNTH_1"/>
    <property type="match status" value="1"/>
</dbReference>
<dbReference type="PROSITE" id="PS00816">
    <property type="entry name" value="AIPM_HOMOCIT_SYNTH_2"/>
    <property type="match status" value="1"/>
</dbReference>
<dbReference type="PROSITE" id="PS50991">
    <property type="entry name" value="PYR_CT"/>
    <property type="match status" value="1"/>
</dbReference>
<comment type="function">
    <text evidence="1">Catalyzes the condensation of the acetyl group of acetyl-CoA with 3-methyl-2-oxobutanoate (2-ketoisovalerate) to form 3-carboxy-3-hydroxy-4-methylpentanoate (2-isopropylmalate).</text>
</comment>
<comment type="catalytic activity">
    <reaction evidence="1">
        <text>3-methyl-2-oxobutanoate + acetyl-CoA + H2O = (2S)-2-isopropylmalate + CoA + H(+)</text>
        <dbReference type="Rhea" id="RHEA:21524"/>
        <dbReference type="ChEBI" id="CHEBI:1178"/>
        <dbReference type="ChEBI" id="CHEBI:11851"/>
        <dbReference type="ChEBI" id="CHEBI:15377"/>
        <dbReference type="ChEBI" id="CHEBI:15378"/>
        <dbReference type="ChEBI" id="CHEBI:57287"/>
        <dbReference type="ChEBI" id="CHEBI:57288"/>
        <dbReference type="EC" id="2.3.3.13"/>
    </reaction>
</comment>
<comment type="cofactor">
    <cofactor evidence="1">
        <name>Mn(2+)</name>
        <dbReference type="ChEBI" id="CHEBI:29035"/>
    </cofactor>
</comment>
<comment type="pathway">
    <text evidence="1">Amino-acid biosynthesis; L-leucine biosynthesis; L-leucine from 3-methyl-2-oxobutanoate: step 1/4.</text>
</comment>
<comment type="subunit">
    <text evidence="1">Homodimer.</text>
</comment>
<comment type="subcellular location">
    <subcellularLocation>
        <location evidence="1">Cytoplasm</location>
    </subcellularLocation>
</comment>
<comment type="similarity">
    <text evidence="1">Belongs to the alpha-IPM synthase/homocitrate synthase family. LeuA type 1 subfamily.</text>
</comment>
<reference key="1">
    <citation type="journal article" date="2009" name="PLoS ONE">
        <title>Genome analysis of the anaerobic thermohalophilic bacterium Halothermothrix orenii.</title>
        <authorList>
            <person name="Mavromatis K."/>
            <person name="Ivanova N."/>
            <person name="Anderson I."/>
            <person name="Lykidis A."/>
            <person name="Hooper S.D."/>
            <person name="Sun H."/>
            <person name="Kunin V."/>
            <person name="Lapidus A."/>
            <person name="Hugenholtz P."/>
            <person name="Patel B."/>
            <person name="Kyrpides N.C."/>
        </authorList>
    </citation>
    <scope>NUCLEOTIDE SEQUENCE [LARGE SCALE GENOMIC DNA]</scope>
    <source>
        <strain>H 168 / OCM 544 / DSM 9562</strain>
    </source>
</reference>
<proteinExistence type="inferred from homology"/>
<accession>B8CX21</accession>
<gene>
    <name evidence="1" type="primary">leuA</name>
    <name type="ordered locus">Hore_10860</name>
</gene>
<feature type="chain" id="PRO_1000149209" description="2-isopropylmalate synthase">
    <location>
        <begin position="1"/>
        <end position="515"/>
    </location>
</feature>
<feature type="domain" description="Pyruvate carboxyltransferase" evidence="1">
    <location>
        <begin position="4"/>
        <end position="264"/>
    </location>
</feature>
<feature type="region of interest" description="Regulatory domain" evidence="1">
    <location>
        <begin position="390"/>
        <end position="515"/>
    </location>
</feature>
<feature type="binding site" evidence="1">
    <location>
        <position position="13"/>
    </location>
    <ligand>
        <name>Mn(2+)</name>
        <dbReference type="ChEBI" id="CHEBI:29035"/>
    </ligand>
</feature>
<feature type="binding site" evidence="1">
    <location>
        <position position="201"/>
    </location>
    <ligand>
        <name>Mn(2+)</name>
        <dbReference type="ChEBI" id="CHEBI:29035"/>
    </ligand>
</feature>
<feature type="binding site" evidence="1">
    <location>
        <position position="203"/>
    </location>
    <ligand>
        <name>Mn(2+)</name>
        <dbReference type="ChEBI" id="CHEBI:29035"/>
    </ligand>
</feature>
<feature type="binding site" evidence="1">
    <location>
        <position position="237"/>
    </location>
    <ligand>
        <name>Mn(2+)</name>
        <dbReference type="ChEBI" id="CHEBI:29035"/>
    </ligand>
</feature>
<sequence length="515" mass="57025">MGEVKIFDTTLRDGEQSPGVSLIPEEKLAIAKQLARMKVDVIEAGFPISSPGDFEAVQIISENIRDVEVAALARSRKKDIDRAWEALRNGGDPRIHVFIATSPIHMKYKLKLSEEQVIEKAVEAVKYASKYTSNIEFSAEDASRSQPVFLYRLFERVINAGAKVINIPDTVGYAIPEEFGKLIRDIKENVSNIDKVDISVHCHNDLGLAVANSLAAVENGANQIEVAVNGIGERAGNTALEEIIMALYTRKDFYNIGINQDTTQIARLSKLVSNLTGMTIQPNKAIVGANAFAHESGIHQDGVIKERTTYEIMDARTIGLKDNKLVLGKHSGRHAFREFIQKLGYDIDDETFEEIFIEFKKLADKKKNITHVEIEALIDNHYHTFDKVYELDYLSVNTGNKVLPTATIKLKKENNIIEKAACSGDGPVDAIFQAINEIVGIDDIKLISYHINAVTEGKDALGEVIVKTKIEDNTYTGHSAMTDITEASALAYLETINKFLTSEQTRQTTSAQEGI</sequence>
<protein>
    <recommendedName>
        <fullName evidence="1">2-isopropylmalate synthase</fullName>
        <ecNumber evidence="1">2.3.3.13</ecNumber>
    </recommendedName>
    <alternativeName>
        <fullName evidence="1">Alpha-IPM synthase</fullName>
    </alternativeName>
    <alternativeName>
        <fullName evidence="1">Alpha-isopropylmalate synthase</fullName>
    </alternativeName>
</protein>
<organism>
    <name type="scientific">Halothermothrix orenii (strain H 168 / OCM 544 / DSM 9562)</name>
    <dbReference type="NCBI Taxonomy" id="373903"/>
    <lineage>
        <taxon>Bacteria</taxon>
        <taxon>Bacillati</taxon>
        <taxon>Bacillota</taxon>
        <taxon>Clostridia</taxon>
        <taxon>Halanaerobiales</taxon>
        <taxon>Halothermotrichaceae</taxon>
        <taxon>Halothermothrix</taxon>
    </lineage>
</organism>
<evidence type="ECO:0000255" key="1">
    <source>
        <dbReference type="HAMAP-Rule" id="MF_01025"/>
    </source>
</evidence>
<keyword id="KW-0028">Amino-acid biosynthesis</keyword>
<keyword id="KW-0100">Branched-chain amino acid biosynthesis</keyword>
<keyword id="KW-0963">Cytoplasm</keyword>
<keyword id="KW-0432">Leucine biosynthesis</keyword>
<keyword id="KW-0464">Manganese</keyword>
<keyword id="KW-0479">Metal-binding</keyword>
<keyword id="KW-1185">Reference proteome</keyword>
<keyword id="KW-0808">Transferase</keyword>
<name>LEU1_HALOH</name>